<keyword id="KW-0010">Activator</keyword>
<keyword id="KW-0217">Developmental protein</keyword>
<keyword id="KW-0238">DNA-binding</keyword>
<keyword id="KW-0256">Endoplasmic reticulum</keyword>
<keyword id="KW-0325">Glycoprotein</keyword>
<keyword id="KW-0472">Membrane</keyword>
<keyword id="KW-0539">Nucleus</keyword>
<keyword id="KW-1185">Reference proteome</keyword>
<keyword id="KW-0735">Signal-anchor</keyword>
<keyword id="KW-0804">Transcription</keyword>
<keyword id="KW-0805">Transcription regulation</keyword>
<keyword id="KW-0812">Transmembrane</keyword>
<keyword id="KW-1133">Transmembrane helix</keyword>
<keyword id="KW-0834">Unfolded protein response</keyword>
<gene>
    <name type="primary">creb3l2</name>
    <name type="ORF">zgc:158603</name>
</gene>
<sequence length="519" mass="56901">MEIMDSGEPFLQWDKNLSELSEAGENDILYSTHFTDLLDDLSQEALLGQLLSDPFLSGRGDAMDTEEELTRASPVPPHIQAEHSYSLCGDSRPQSPLSHLPGEPGSDAADSESDEWPMEQEDKGIKMEPLLCVPLPALTLTVTPAGSAPEPVIDSCDSAQSLSLPQVKEDSNSPQIKLEPHEVDQFLNLSPKGLECLQMPPTPPSSVGSDSEGSQSPVHPCAPASPTQTPAVLKVAPRAPSSLSSSPLLTAPHKLQGSGPLLLTEEEKRTLIAEGYPVPTKLPLSKAEEKALKKIRRKIKNKISAQESRRKKKEYVDALEKKVETCSNENHELRRKVENLECTNKSLLQQLHSLQAVVAGKVPRSCRVTGTQTSTCLMVVVLCFSLFLGSFYPGLSPCSSITKADLSREISIHDSYTTTVKSRSLLSIQEPGGLDEPHPIGLGGEYPEWDRQADVMAAWRFEQQHKEEEAELHKAEHRPLLLSTNETHAQKAILIDLHTHRSNETAKVIQLDRTVNETS</sequence>
<dbReference type="EMBL" id="BC129318">
    <property type="protein sequence ID" value="AAI29319.1"/>
    <property type="molecule type" value="mRNA"/>
</dbReference>
<dbReference type="RefSeq" id="NP_001074120.1">
    <property type="nucleotide sequence ID" value="NM_001080651.2"/>
</dbReference>
<dbReference type="SMR" id="A1L224"/>
<dbReference type="FunCoup" id="A1L224">
    <property type="interactions" value="1364"/>
</dbReference>
<dbReference type="STRING" id="7955.ENSDARP00000130319"/>
<dbReference type="GlyCosmos" id="A1L224">
    <property type="glycosylation" value="3 sites, No reported glycans"/>
</dbReference>
<dbReference type="PaxDb" id="7955-ENSDARP00000087416"/>
<dbReference type="Ensembl" id="ENSDART00000092984">
    <property type="protein sequence ID" value="ENSDARP00000087416"/>
    <property type="gene ID" value="ENSDARG00000063563"/>
</dbReference>
<dbReference type="Ensembl" id="ENSDART00000158466">
    <property type="protein sequence ID" value="ENSDARP00000130319"/>
    <property type="gene ID" value="ENSDARG00000063563"/>
</dbReference>
<dbReference type="GeneID" id="791169"/>
<dbReference type="KEGG" id="dre:791169"/>
<dbReference type="AGR" id="ZFIN:ZDB-GENE-070112-1542"/>
<dbReference type="CTD" id="64764"/>
<dbReference type="ZFIN" id="ZDB-GENE-070112-1542">
    <property type="gene designation" value="creb3l2"/>
</dbReference>
<dbReference type="eggNOG" id="KOG0709">
    <property type="taxonomic scope" value="Eukaryota"/>
</dbReference>
<dbReference type="HOGENOM" id="CLU_037638_0_0_1"/>
<dbReference type="InParanoid" id="A1L224"/>
<dbReference type="OMA" id="CINTIFT"/>
<dbReference type="OrthoDB" id="674948at2759"/>
<dbReference type="PhylomeDB" id="A1L224"/>
<dbReference type="TreeFam" id="TF316079"/>
<dbReference type="PRO" id="PR:A1L224"/>
<dbReference type="Proteomes" id="UP000000437">
    <property type="component" value="Chromosome 4"/>
</dbReference>
<dbReference type="Bgee" id="ENSDARG00000063563">
    <property type="expression patterns" value="Expressed in caudal fin and 31 other cell types or tissues"/>
</dbReference>
<dbReference type="ExpressionAtlas" id="A1L224">
    <property type="expression patterns" value="baseline and differential"/>
</dbReference>
<dbReference type="GO" id="GO:0005783">
    <property type="term" value="C:endoplasmic reticulum"/>
    <property type="evidence" value="ECO:0000250"/>
    <property type="project" value="UniProtKB"/>
</dbReference>
<dbReference type="GO" id="GO:0005789">
    <property type="term" value="C:endoplasmic reticulum membrane"/>
    <property type="evidence" value="ECO:0007669"/>
    <property type="project" value="UniProtKB-SubCell"/>
</dbReference>
<dbReference type="GO" id="GO:0005634">
    <property type="term" value="C:nucleus"/>
    <property type="evidence" value="ECO:0007669"/>
    <property type="project" value="UniProtKB-SubCell"/>
</dbReference>
<dbReference type="GO" id="GO:0035497">
    <property type="term" value="F:cAMP response element binding"/>
    <property type="evidence" value="ECO:0000318"/>
    <property type="project" value="GO_Central"/>
</dbReference>
<dbReference type="GO" id="GO:0000981">
    <property type="term" value="F:DNA-binding transcription factor activity, RNA polymerase II-specific"/>
    <property type="evidence" value="ECO:0000318"/>
    <property type="project" value="GO_Central"/>
</dbReference>
<dbReference type="GO" id="GO:0000976">
    <property type="term" value="F:transcription cis-regulatory region binding"/>
    <property type="evidence" value="ECO:0000250"/>
    <property type="project" value="UniProtKB"/>
</dbReference>
<dbReference type="GO" id="GO:0051216">
    <property type="term" value="P:cartilage development"/>
    <property type="evidence" value="ECO:0000250"/>
    <property type="project" value="UniProtKB"/>
</dbReference>
<dbReference type="GO" id="GO:0002062">
    <property type="term" value="P:chondrocyte differentiation"/>
    <property type="evidence" value="ECO:0000250"/>
    <property type="project" value="UniProtKB"/>
</dbReference>
<dbReference type="GO" id="GO:0060628">
    <property type="term" value="P:regulation of ER to Golgi vesicle-mediated transport"/>
    <property type="evidence" value="ECO:0000315"/>
    <property type="project" value="ZFIN"/>
</dbReference>
<dbReference type="GO" id="GO:0003330">
    <property type="term" value="P:regulation of extracellular matrix constituent secretion"/>
    <property type="evidence" value="ECO:0000315"/>
    <property type="project" value="ZFIN"/>
</dbReference>
<dbReference type="GO" id="GO:0006357">
    <property type="term" value="P:regulation of transcription by RNA polymerase II"/>
    <property type="evidence" value="ECO:0000318"/>
    <property type="project" value="GO_Central"/>
</dbReference>
<dbReference type="GO" id="GO:0034976">
    <property type="term" value="P:response to endoplasmic reticulum stress"/>
    <property type="evidence" value="ECO:0000250"/>
    <property type="project" value="UniProtKB"/>
</dbReference>
<dbReference type="GO" id="GO:0006986">
    <property type="term" value="P:response to unfolded protein"/>
    <property type="evidence" value="ECO:0007669"/>
    <property type="project" value="UniProtKB-KW"/>
</dbReference>
<dbReference type="CDD" id="cd14689">
    <property type="entry name" value="bZIP_CREB3"/>
    <property type="match status" value="1"/>
</dbReference>
<dbReference type="FunFam" id="1.20.5.170:FF:000054">
    <property type="entry name" value="Cyclic AMP-responsive element-binding protein 3-like 2"/>
    <property type="match status" value="1"/>
</dbReference>
<dbReference type="Gene3D" id="1.20.5.170">
    <property type="match status" value="1"/>
</dbReference>
<dbReference type="InterPro" id="IPR004827">
    <property type="entry name" value="bZIP"/>
</dbReference>
<dbReference type="InterPro" id="IPR046347">
    <property type="entry name" value="bZIP_sf"/>
</dbReference>
<dbReference type="PANTHER" id="PTHR46004">
    <property type="entry name" value="CYCLIC AMP RESPONSE ELEMENT-BINDING PROTEIN A"/>
    <property type="match status" value="1"/>
</dbReference>
<dbReference type="PANTHER" id="PTHR46004:SF2">
    <property type="entry name" value="CYCLIC AMP-RESPONSIVE ELEMENT-BINDING PROTEIN 3-LIKE PROTEIN 2"/>
    <property type="match status" value="1"/>
</dbReference>
<dbReference type="Pfam" id="PF00170">
    <property type="entry name" value="bZIP_1"/>
    <property type="match status" value="1"/>
</dbReference>
<dbReference type="SMART" id="SM00338">
    <property type="entry name" value="BRLZ"/>
    <property type="match status" value="1"/>
</dbReference>
<dbReference type="SUPFAM" id="SSF57959">
    <property type="entry name" value="Leucine zipper domain"/>
    <property type="match status" value="1"/>
</dbReference>
<dbReference type="PROSITE" id="PS50217">
    <property type="entry name" value="BZIP"/>
    <property type="match status" value="1"/>
</dbReference>
<dbReference type="PROSITE" id="PS00036">
    <property type="entry name" value="BZIP_BASIC"/>
    <property type="match status" value="1"/>
</dbReference>
<feature type="chain" id="PRO_0000288071" description="Cyclic AMP-responsive element-binding protein 3-like protein 2">
    <location>
        <begin position="1"/>
        <end position="519"/>
    </location>
</feature>
<feature type="chain" id="PRO_0000296213" description="Processed cyclic AMP-responsive element-binding protein 3-like protein 2">
    <location>
        <begin position="1"/>
        <end status="unknown"/>
    </location>
</feature>
<feature type="topological domain" description="Cytoplasmic" evidence="4">
    <location>
        <begin position="1"/>
        <end position="374"/>
    </location>
</feature>
<feature type="transmembrane region" description="Helical; Signal-anchor for type II membrane protein" evidence="4">
    <location>
        <begin position="375"/>
        <end position="395"/>
    </location>
</feature>
<feature type="topological domain" description="Lumenal" evidence="4">
    <location>
        <begin position="396"/>
        <end position="519"/>
    </location>
</feature>
<feature type="domain" description="bZIP" evidence="5">
    <location>
        <begin position="291"/>
        <end position="354"/>
    </location>
</feature>
<feature type="region of interest" description="Disordered" evidence="6">
    <location>
        <begin position="58"/>
        <end position="77"/>
    </location>
</feature>
<feature type="region of interest" description="Disordered" evidence="6">
    <location>
        <begin position="85"/>
        <end position="121"/>
    </location>
</feature>
<feature type="region of interest" description="Disordered" evidence="6">
    <location>
        <begin position="193"/>
        <end position="261"/>
    </location>
</feature>
<feature type="region of interest" description="Basic motif" evidence="5">
    <location>
        <begin position="293"/>
        <end position="322"/>
    </location>
</feature>
<feature type="region of interest" description="Leucine-zipper" evidence="5">
    <location>
        <begin position="333"/>
        <end position="354"/>
    </location>
</feature>
<feature type="short sequence motif" description="S1P recognition" evidence="2">
    <location>
        <begin position="423"/>
        <end position="426"/>
    </location>
</feature>
<feature type="compositionally biased region" description="Acidic residues" evidence="6">
    <location>
        <begin position="109"/>
        <end position="119"/>
    </location>
</feature>
<feature type="compositionally biased region" description="Low complexity" evidence="6">
    <location>
        <begin position="205"/>
        <end position="217"/>
    </location>
</feature>
<feature type="compositionally biased region" description="Low complexity" evidence="6">
    <location>
        <begin position="240"/>
        <end position="249"/>
    </location>
</feature>
<feature type="glycosylation site" description="N-linked (GlcNAc...) asparagine" evidence="4">
    <location>
        <position position="485"/>
    </location>
</feature>
<feature type="glycosylation site" description="N-linked (GlcNAc...) asparagine" evidence="4">
    <location>
        <position position="503"/>
    </location>
</feature>
<feature type="glycosylation site" description="N-linked (GlcNAc...) asparagine" evidence="4">
    <location>
        <position position="516"/>
    </location>
</feature>
<proteinExistence type="evidence at transcript level"/>
<protein>
    <recommendedName>
        <fullName>Cyclic AMP-responsive element-binding protein 3-like protein 2</fullName>
        <shortName>cAMP-responsive element-binding protein 3-like protein 2</shortName>
    </recommendedName>
    <component>
        <recommendedName>
            <fullName>Processed cyclic AMP-responsive element-binding protein 3-like protein 2</fullName>
        </recommendedName>
    </component>
</protein>
<comment type="function">
    <text evidence="3">Transcription factor involved in unfolded protein response (UPR). In the absence of endoplasmic reticulum (ER) stress, inserted into ER membranes, with N-terminal DNA-binding and transcription activation domains oriented toward the cytosolic face of the membrane. In response to ER stress, transported to the Golgi, where it is cleaved in a site-specific manner by resident proteases S1P/mbtps1 and S2P/mbtps2. The released N-terminal cytosolic domain is translocated to the nucleus to effect transcription of specific target genes. Plays a critical role in chondrogenesis. May protect neuroblastoma cells from ER stress-induced death. In vitro activates transcription of target genes via direct binding to the CRE site.</text>
</comment>
<comment type="subunit">
    <text evidence="1">Binds DNA as a dimer.</text>
</comment>
<comment type="subcellular location">
    <subcellularLocation>
        <location evidence="3">Endoplasmic reticulum membrane</location>
        <topology evidence="3">Single-pass type II membrane protein</topology>
    </subcellularLocation>
    <text evidence="3">ER membrane resident protein. Upon ER stress, translocated to the Golgi apparatus where it is cleaved. The cytosolic N-terminal fragment (processed cyclic AMP-responsive element-binding protein 3-like protein 1) is transported into the nucleus.</text>
</comment>
<comment type="subcellular location">
    <molecule>Processed cyclic AMP-responsive element-binding protein 3-like protein 2</molecule>
    <subcellularLocation>
        <location evidence="3">Nucleus</location>
    </subcellularLocation>
    <text evidence="3">Upon ER stress, translocated into the nucleus.</text>
</comment>
<comment type="PTM">
    <text evidence="3">Upon ER stress, translocated to the Golgi apparatus, where it is processed by regulated intramembrane proteolysis (RIP) to release the cytosol-facing N-terminal transcription factor domain. The cleavage is performed sequentially by site-1 and site-2 proteases (S1P/mbtps1 and S2P/mbtps2).</text>
</comment>
<comment type="similarity">
    <text evidence="7">Belongs to the bZIP family. ATF subfamily.</text>
</comment>
<accession>A1L224</accession>
<organism>
    <name type="scientific">Danio rerio</name>
    <name type="common">Zebrafish</name>
    <name type="synonym">Brachydanio rerio</name>
    <dbReference type="NCBI Taxonomy" id="7955"/>
    <lineage>
        <taxon>Eukaryota</taxon>
        <taxon>Metazoa</taxon>
        <taxon>Chordata</taxon>
        <taxon>Craniata</taxon>
        <taxon>Vertebrata</taxon>
        <taxon>Euteleostomi</taxon>
        <taxon>Actinopterygii</taxon>
        <taxon>Neopterygii</taxon>
        <taxon>Teleostei</taxon>
        <taxon>Ostariophysi</taxon>
        <taxon>Cypriniformes</taxon>
        <taxon>Danionidae</taxon>
        <taxon>Danioninae</taxon>
        <taxon>Danio</taxon>
    </lineage>
</organism>
<evidence type="ECO:0000250" key="1"/>
<evidence type="ECO:0000250" key="2">
    <source>
        <dbReference type="UniProtKB" id="Q70SY1"/>
    </source>
</evidence>
<evidence type="ECO:0000250" key="3">
    <source>
        <dbReference type="UniProtKB" id="Q8BH52"/>
    </source>
</evidence>
<evidence type="ECO:0000255" key="4"/>
<evidence type="ECO:0000255" key="5">
    <source>
        <dbReference type="PROSITE-ProRule" id="PRU00978"/>
    </source>
</evidence>
<evidence type="ECO:0000256" key="6">
    <source>
        <dbReference type="SAM" id="MobiDB-lite"/>
    </source>
</evidence>
<evidence type="ECO:0000305" key="7"/>
<reference key="1">
    <citation type="submission" date="2006-12" db="EMBL/GenBank/DDBJ databases">
        <authorList>
            <consortium name="NIH - Zebrafish Gene Collection (ZGC) project"/>
        </authorList>
    </citation>
    <scope>NUCLEOTIDE SEQUENCE [LARGE SCALE MRNA]</scope>
    <source>
        <strain>AB</strain>
    </source>
</reference>
<name>CR3L2_DANRE</name>